<protein>
    <recommendedName>
        <fullName>Aspartate-semialdehyde dehydrogenase</fullName>
        <shortName>ASA dehydrogenase</shortName>
        <shortName>ASADH</shortName>
        <ecNumber>1.2.1.11</ecNumber>
    </recommendedName>
    <alternativeName>
        <fullName>Aspartate-beta-semialdehyde dehydrogenase</fullName>
    </alternativeName>
</protein>
<evidence type="ECO:0000250" key="1"/>
<evidence type="ECO:0000305" key="2"/>
<accession>P9WNX4</accession>
<accession>L0TDK5</accession>
<accession>P0A542</accession>
<accession>P47730</accession>
<accession>P97049</accession>
<accession>Q597F4</accession>
<proteinExistence type="inferred from homology"/>
<dbReference type="EC" id="1.2.1.11"/>
<dbReference type="EMBL" id="AE000516">
    <property type="protein sequence ID" value="AAK48179.1"/>
    <property type="molecule type" value="Genomic_DNA"/>
</dbReference>
<dbReference type="PIR" id="E70794">
    <property type="entry name" value="E70794"/>
</dbReference>
<dbReference type="RefSeq" id="WP_003419825.1">
    <property type="nucleotide sequence ID" value="NZ_KK341227.1"/>
</dbReference>
<dbReference type="SMR" id="P9WNX4"/>
<dbReference type="KEGG" id="mtc:MT3811"/>
<dbReference type="PATRIC" id="fig|83331.31.peg.4104"/>
<dbReference type="HOGENOM" id="CLU_049966_0_0_11"/>
<dbReference type="UniPathway" id="UPA00034">
    <property type="reaction ID" value="UER00016"/>
</dbReference>
<dbReference type="UniPathway" id="UPA00050">
    <property type="reaction ID" value="UER00463"/>
</dbReference>
<dbReference type="UniPathway" id="UPA00051">
    <property type="reaction ID" value="UER00464"/>
</dbReference>
<dbReference type="Proteomes" id="UP000001020">
    <property type="component" value="Chromosome"/>
</dbReference>
<dbReference type="GO" id="GO:0004073">
    <property type="term" value="F:aspartate-semialdehyde dehydrogenase activity"/>
    <property type="evidence" value="ECO:0007669"/>
    <property type="project" value="UniProtKB-UniRule"/>
</dbReference>
<dbReference type="GO" id="GO:0051287">
    <property type="term" value="F:NAD binding"/>
    <property type="evidence" value="ECO:0007669"/>
    <property type="project" value="InterPro"/>
</dbReference>
<dbReference type="GO" id="GO:0050661">
    <property type="term" value="F:NADP binding"/>
    <property type="evidence" value="ECO:0007669"/>
    <property type="project" value="UniProtKB-UniRule"/>
</dbReference>
<dbReference type="GO" id="GO:0046983">
    <property type="term" value="F:protein dimerization activity"/>
    <property type="evidence" value="ECO:0007669"/>
    <property type="project" value="InterPro"/>
</dbReference>
<dbReference type="GO" id="GO:0071266">
    <property type="term" value="P:'de novo' L-methionine biosynthetic process"/>
    <property type="evidence" value="ECO:0007669"/>
    <property type="project" value="UniProtKB-UniRule"/>
</dbReference>
<dbReference type="GO" id="GO:0019877">
    <property type="term" value="P:diaminopimelate biosynthetic process"/>
    <property type="evidence" value="ECO:0007669"/>
    <property type="project" value="UniProtKB-UniRule"/>
</dbReference>
<dbReference type="GO" id="GO:0009097">
    <property type="term" value="P:isoleucine biosynthetic process"/>
    <property type="evidence" value="ECO:0007669"/>
    <property type="project" value="InterPro"/>
</dbReference>
<dbReference type="GO" id="GO:0009089">
    <property type="term" value="P:lysine biosynthetic process via diaminopimelate"/>
    <property type="evidence" value="ECO:0007669"/>
    <property type="project" value="UniProtKB-UniRule"/>
</dbReference>
<dbReference type="GO" id="GO:0009088">
    <property type="term" value="P:threonine biosynthetic process"/>
    <property type="evidence" value="ECO:0007669"/>
    <property type="project" value="UniProtKB-UniRule"/>
</dbReference>
<dbReference type="CDD" id="cd18131">
    <property type="entry name" value="ASADH_C_bac_euk_like"/>
    <property type="match status" value="1"/>
</dbReference>
<dbReference type="CDD" id="cd02316">
    <property type="entry name" value="VcASADH2_like_N"/>
    <property type="match status" value="1"/>
</dbReference>
<dbReference type="FunFam" id="3.30.360.10:FF:000034">
    <property type="entry name" value="Aspartate-semialdehyde dehydrogenase"/>
    <property type="match status" value="1"/>
</dbReference>
<dbReference type="Gene3D" id="3.30.360.10">
    <property type="entry name" value="Dihydrodipicolinate Reductase, domain 2"/>
    <property type="match status" value="1"/>
</dbReference>
<dbReference type="Gene3D" id="3.40.50.720">
    <property type="entry name" value="NAD(P)-binding Rossmann-like Domain"/>
    <property type="match status" value="1"/>
</dbReference>
<dbReference type="HAMAP" id="MF_02121">
    <property type="entry name" value="ASADH"/>
    <property type="match status" value="1"/>
</dbReference>
<dbReference type="InterPro" id="IPR000319">
    <property type="entry name" value="Asp-semialdehyde_DH_CS"/>
</dbReference>
<dbReference type="InterPro" id="IPR012080">
    <property type="entry name" value="Asp_semialdehyde_DH"/>
</dbReference>
<dbReference type="InterPro" id="IPR005986">
    <property type="entry name" value="Asp_semialdehyde_DH_beta"/>
</dbReference>
<dbReference type="InterPro" id="IPR036291">
    <property type="entry name" value="NAD(P)-bd_dom_sf"/>
</dbReference>
<dbReference type="InterPro" id="IPR000534">
    <property type="entry name" value="Semialdehyde_DH_NAD-bd"/>
</dbReference>
<dbReference type="InterPro" id="IPR012280">
    <property type="entry name" value="Semialdhyde_DH_dimer_dom"/>
</dbReference>
<dbReference type="NCBIfam" id="TIGR01296">
    <property type="entry name" value="asd_B"/>
    <property type="match status" value="1"/>
</dbReference>
<dbReference type="NCBIfam" id="NF011456">
    <property type="entry name" value="PRK14874.1"/>
    <property type="match status" value="1"/>
</dbReference>
<dbReference type="PANTHER" id="PTHR46278:SF2">
    <property type="entry name" value="ASPARTATE-SEMIALDEHYDE DEHYDROGENASE"/>
    <property type="match status" value="1"/>
</dbReference>
<dbReference type="PANTHER" id="PTHR46278">
    <property type="entry name" value="DEHYDROGENASE, PUTATIVE-RELATED"/>
    <property type="match status" value="1"/>
</dbReference>
<dbReference type="Pfam" id="PF01118">
    <property type="entry name" value="Semialdhyde_dh"/>
    <property type="match status" value="1"/>
</dbReference>
<dbReference type="Pfam" id="PF02774">
    <property type="entry name" value="Semialdhyde_dhC"/>
    <property type="match status" value="1"/>
</dbReference>
<dbReference type="PIRSF" id="PIRSF000148">
    <property type="entry name" value="ASA_dh"/>
    <property type="match status" value="1"/>
</dbReference>
<dbReference type="SMART" id="SM00859">
    <property type="entry name" value="Semialdhyde_dh"/>
    <property type="match status" value="1"/>
</dbReference>
<dbReference type="SUPFAM" id="SSF55347">
    <property type="entry name" value="Glyceraldehyde-3-phosphate dehydrogenase-like, C-terminal domain"/>
    <property type="match status" value="1"/>
</dbReference>
<dbReference type="SUPFAM" id="SSF51735">
    <property type="entry name" value="NAD(P)-binding Rossmann-fold domains"/>
    <property type="match status" value="1"/>
</dbReference>
<dbReference type="PROSITE" id="PS01103">
    <property type="entry name" value="ASD"/>
    <property type="match status" value="1"/>
</dbReference>
<comment type="function">
    <text evidence="1">Catalyzes the NADPH-dependent formation of L-aspartate-semialdehyde (L-ASA) by the reductive dephosphorylation of L-aspartyl-4-phosphate.</text>
</comment>
<comment type="catalytic activity">
    <reaction>
        <text>L-aspartate 4-semialdehyde + phosphate + NADP(+) = 4-phospho-L-aspartate + NADPH + H(+)</text>
        <dbReference type="Rhea" id="RHEA:24284"/>
        <dbReference type="ChEBI" id="CHEBI:15378"/>
        <dbReference type="ChEBI" id="CHEBI:43474"/>
        <dbReference type="ChEBI" id="CHEBI:57535"/>
        <dbReference type="ChEBI" id="CHEBI:57783"/>
        <dbReference type="ChEBI" id="CHEBI:58349"/>
        <dbReference type="ChEBI" id="CHEBI:537519"/>
        <dbReference type="EC" id="1.2.1.11"/>
    </reaction>
</comment>
<comment type="pathway">
    <text>Amino-acid biosynthesis; L-lysine biosynthesis via DAP pathway; (S)-tetrahydrodipicolinate from L-aspartate: step 2/4.</text>
</comment>
<comment type="pathway">
    <text>Amino-acid biosynthesis; L-methionine biosynthesis via de novo pathway; L-homoserine from L-aspartate: step 2/3.</text>
</comment>
<comment type="pathway">
    <text>Amino-acid biosynthesis; L-threonine biosynthesis; L-threonine from L-aspartate: step 2/5.</text>
</comment>
<comment type="subunit">
    <text evidence="1">Homodimer.</text>
</comment>
<comment type="similarity">
    <text evidence="2">Belongs to the aspartate-semialdehyde dehydrogenase family.</text>
</comment>
<reference key="1">
    <citation type="journal article" date="2002" name="J. Bacteriol.">
        <title>Whole-genome comparison of Mycobacterium tuberculosis clinical and laboratory strains.</title>
        <authorList>
            <person name="Fleischmann R.D."/>
            <person name="Alland D."/>
            <person name="Eisen J.A."/>
            <person name="Carpenter L."/>
            <person name="White O."/>
            <person name="Peterson J.D."/>
            <person name="DeBoy R.T."/>
            <person name="Dodson R.J."/>
            <person name="Gwinn M.L."/>
            <person name="Haft D.H."/>
            <person name="Hickey E.K."/>
            <person name="Kolonay J.F."/>
            <person name="Nelson W.C."/>
            <person name="Umayam L.A."/>
            <person name="Ermolaeva M.D."/>
            <person name="Salzberg S.L."/>
            <person name="Delcher A."/>
            <person name="Utterback T.R."/>
            <person name="Weidman J.F."/>
            <person name="Khouri H.M."/>
            <person name="Gill J."/>
            <person name="Mikula A."/>
            <person name="Bishai W."/>
            <person name="Jacobs W.R. Jr."/>
            <person name="Venter J.C."/>
            <person name="Fraser C.M."/>
        </authorList>
    </citation>
    <scope>NUCLEOTIDE SEQUENCE [LARGE SCALE GENOMIC DNA]</scope>
    <source>
        <strain>CDC 1551 / Oshkosh</strain>
    </source>
</reference>
<feature type="chain" id="PRO_0000427051" description="Aspartate-semialdehyde dehydrogenase">
    <location>
        <begin position="1"/>
        <end position="345"/>
    </location>
</feature>
<feature type="active site" description="Acyl-thioester intermediate" evidence="1">
    <location>
        <position position="130"/>
    </location>
</feature>
<feature type="active site" description="Proton acceptor" evidence="1">
    <location>
        <position position="256"/>
    </location>
</feature>
<feature type="binding site" evidence="1">
    <location>
        <begin position="11"/>
        <end position="14"/>
    </location>
    <ligand>
        <name>NADP(+)</name>
        <dbReference type="ChEBI" id="CHEBI:58349"/>
    </ligand>
</feature>
<feature type="binding site" evidence="1">
    <location>
        <begin position="39"/>
        <end position="40"/>
    </location>
    <ligand>
        <name>NADP(+)</name>
        <dbReference type="ChEBI" id="CHEBI:58349"/>
    </ligand>
</feature>
<feature type="binding site" evidence="1">
    <location>
        <position position="99"/>
    </location>
    <ligand>
        <name>phosphate</name>
        <dbReference type="ChEBI" id="CHEBI:43474"/>
    </ligand>
</feature>
<feature type="binding site" evidence="1">
    <location>
        <position position="157"/>
    </location>
    <ligand>
        <name>substrate</name>
    </ligand>
</feature>
<feature type="binding site" evidence="1">
    <location>
        <begin position="160"/>
        <end position="161"/>
    </location>
    <ligand>
        <name>NADP(+)</name>
        <dbReference type="ChEBI" id="CHEBI:58349"/>
    </ligand>
</feature>
<feature type="binding site" evidence="1">
    <location>
        <position position="227"/>
    </location>
    <ligand>
        <name>phosphate</name>
        <dbReference type="ChEBI" id="CHEBI:43474"/>
    </ligand>
</feature>
<feature type="binding site" evidence="1">
    <location>
        <position position="249"/>
    </location>
    <ligand>
        <name>substrate</name>
    </ligand>
</feature>
<feature type="binding site" evidence="1">
    <location>
        <position position="325"/>
    </location>
    <ligand>
        <name>NADP(+)</name>
        <dbReference type="ChEBI" id="CHEBI:58349"/>
    </ligand>
</feature>
<organism>
    <name type="scientific">Mycobacterium tuberculosis (strain CDC 1551 / Oshkosh)</name>
    <dbReference type="NCBI Taxonomy" id="83331"/>
    <lineage>
        <taxon>Bacteria</taxon>
        <taxon>Bacillati</taxon>
        <taxon>Actinomycetota</taxon>
        <taxon>Actinomycetes</taxon>
        <taxon>Mycobacteriales</taxon>
        <taxon>Mycobacteriaceae</taxon>
        <taxon>Mycobacterium</taxon>
        <taxon>Mycobacterium tuberculosis complex</taxon>
    </lineage>
</organism>
<sequence length="345" mass="36230">MGLSIGIVGATGQVGQVMRTLLDERDFPASAVRFFASARSQGRKLAFRGQEIEVEDAETADPSGLDIALFSAGSAMSKVQAPRFAAAGVTVIDNSSAWRKDPDVPLVVSEVNFERDAHRRPKGIIANPNCTTMAAMPVLKVLHDEARLVRLVVSSYQAVSGSGLAGVAELAEQARAVIGGAEQLVYDGGALEFPPPNTYVAPIAFNVVPLAGSLVDDGSGETDEDQKLRFESRKILGIPDLLVSGTCVRVPVFTGHSLSINAEFAQPLSPERARELLDGATGVQLVDVPTPLAAAGVDESLVGRIRRDPGVPDGRGLALFVSGDNLRKGAALNTIQIAELLTADL</sequence>
<gene>
    <name type="primary">asd</name>
    <name type="ordered locus">MT3811</name>
</gene>
<name>DHAS_MYCTO</name>
<keyword id="KW-0028">Amino-acid biosynthesis</keyword>
<keyword id="KW-0220">Diaminopimelate biosynthesis</keyword>
<keyword id="KW-0457">Lysine biosynthesis</keyword>
<keyword id="KW-0486">Methionine biosynthesis</keyword>
<keyword id="KW-0521">NADP</keyword>
<keyword id="KW-0560">Oxidoreductase</keyword>
<keyword id="KW-1185">Reference proteome</keyword>
<keyword id="KW-0791">Threonine biosynthesis</keyword>